<evidence type="ECO:0000255" key="1">
    <source>
        <dbReference type="HAMAP-Rule" id="MF_00508"/>
    </source>
</evidence>
<evidence type="ECO:0000305" key="2"/>
<proteinExistence type="inferred from homology"/>
<feature type="chain" id="PRO_1000196294" description="Small ribosomal subunit protein uS10">
    <location>
        <begin position="1"/>
        <end position="103"/>
    </location>
</feature>
<name>RS10_BUCAT</name>
<dbReference type="EMBL" id="CP001158">
    <property type="protein sequence ID" value="ACL30315.1"/>
    <property type="molecule type" value="Genomic_DNA"/>
</dbReference>
<dbReference type="RefSeq" id="WP_009874476.1">
    <property type="nucleotide sequence ID" value="NC_011834.1"/>
</dbReference>
<dbReference type="SMR" id="B8D850"/>
<dbReference type="KEGG" id="bau:BUAPTUC7_519"/>
<dbReference type="HOGENOM" id="CLU_122625_1_3_6"/>
<dbReference type="GO" id="GO:1990904">
    <property type="term" value="C:ribonucleoprotein complex"/>
    <property type="evidence" value="ECO:0007669"/>
    <property type="project" value="UniProtKB-KW"/>
</dbReference>
<dbReference type="GO" id="GO:0005840">
    <property type="term" value="C:ribosome"/>
    <property type="evidence" value="ECO:0007669"/>
    <property type="project" value="UniProtKB-KW"/>
</dbReference>
<dbReference type="GO" id="GO:0003735">
    <property type="term" value="F:structural constituent of ribosome"/>
    <property type="evidence" value="ECO:0007669"/>
    <property type="project" value="InterPro"/>
</dbReference>
<dbReference type="GO" id="GO:0000049">
    <property type="term" value="F:tRNA binding"/>
    <property type="evidence" value="ECO:0007669"/>
    <property type="project" value="UniProtKB-UniRule"/>
</dbReference>
<dbReference type="GO" id="GO:0006412">
    <property type="term" value="P:translation"/>
    <property type="evidence" value="ECO:0007669"/>
    <property type="project" value="UniProtKB-UniRule"/>
</dbReference>
<dbReference type="FunFam" id="3.30.70.600:FF:000001">
    <property type="entry name" value="30S ribosomal protein S10"/>
    <property type="match status" value="1"/>
</dbReference>
<dbReference type="Gene3D" id="3.30.70.600">
    <property type="entry name" value="Ribosomal protein S10 domain"/>
    <property type="match status" value="1"/>
</dbReference>
<dbReference type="HAMAP" id="MF_00508">
    <property type="entry name" value="Ribosomal_uS10"/>
    <property type="match status" value="1"/>
</dbReference>
<dbReference type="InterPro" id="IPR001848">
    <property type="entry name" value="Ribosomal_uS10"/>
</dbReference>
<dbReference type="InterPro" id="IPR018268">
    <property type="entry name" value="Ribosomal_uS10_CS"/>
</dbReference>
<dbReference type="InterPro" id="IPR027486">
    <property type="entry name" value="Ribosomal_uS10_dom"/>
</dbReference>
<dbReference type="InterPro" id="IPR036838">
    <property type="entry name" value="Ribosomal_uS10_dom_sf"/>
</dbReference>
<dbReference type="NCBIfam" id="NF001861">
    <property type="entry name" value="PRK00596.1"/>
    <property type="match status" value="1"/>
</dbReference>
<dbReference type="NCBIfam" id="TIGR01049">
    <property type="entry name" value="rpsJ_bact"/>
    <property type="match status" value="1"/>
</dbReference>
<dbReference type="PANTHER" id="PTHR11700">
    <property type="entry name" value="30S RIBOSOMAL PROTEIN S10 FAMILY MEMBER"/>
    <property type="match status" value="1"/>
</dbReference>
<dbReference type="Pfam" id="PF00338">
    <property type="entry name" value="Ribosomal_S10"/>
    <property type="match status" value="1"/>
</dbReference>
<dbReference type="PRINTS" id="PR00971">
    <property type="entry name" value="RIBOSOMALS10"/>
</dbReference>
<dbReference type="SMART" id="SM01403">
    <property type="entry name" value="Ribosomal_S10"/>
    <property type="match status" value="1"/>
</dbReference>
<dbReference type="SUPFAM" id="SSF54999">
    <property type="entry name" value="Ribosomal protein S10"/>
    <property type="match status" value="1"/>
</dbReference>
<dbReference type="PROSITE" id="PS00361">
    <property type="entry name" value="RIBOSOMAL_S10"/>
    <property type="match status" value="1"/>
</dbReference>
<gene>
    <name evidence="1" type="primary">rpsJ</name>
    <name type="ordered locus">BUAPTUC7_519</name>
</gene>
<accession>B8D850</accession>
<comment type="function">
    <text evidence="1">Involved in the binding of tRNA to the ribosomes.</text>
</comment>
<comment type="subunit">
    <text evidence="1">Part of the 30S ribosomal subunit.</text>
</comment>
<comment type="similarity">
    <text evidence="1">Belongs to the universal ribosomal protein uS10 family.</text>
</comment>
<reference key="1">
    <citation type="journal article" date="2009" name="Science">
        <title>The dynamics and time scale of ongoing genomic erosion in symbiotic bacteria.</title>
        <authorList>
            <person name="Moran N.A."/>
            <person name="McLaughlin H.J."/>
            <person name="Sorek R."/>
        </authorList>
    </citation>
    <scope>NUCLEOTIDE SEQUENCE [LARGE SCALE GENOMIC DNA]</scope>
    <source>
        <strain>Tuc7</strain>
    </source>
</reference>
<protein>
    <recommendedName>
        <fullName evidence="1">Small ribosomal subunit protein uS10</fullName>
    </recommendedName>
    <alternativeName>
        <fullName evidence="2">30S ribosomal protein S10</fullName>
    </alternativeName>
</protein>
<sequence length="103" mass="11811">MQNQRIRIRLKAFDHRLIDQSTTEIVETAKRTGAQVRGPIPLPTRKERFTILVSPHVNKDARDQYEIRTHKRLIDIVEPTEKTVDALMRLDLAAGVDVQISLG</sequence>
<organism>
    <name type="scientific">Buchnera aphidicola subsp. Acyrthosiphon pisum (strain Tuc7)</name>
    <dbReference type="NCBI Taxonomy" id="561501"/>
    <lineage>
        <taxon>Bacteria</taxon>
        <taxon>Pseudomonadati</taxon>
        <taxon>Pseudomonadota</taxon>
        <taxon>Gammaproteobacteria</taxon>
        <taxon>Enterobacterales</taxon>
        <taxon>Erwiniaceae</taxon>
        <taxon>Buchnera</taxon>
    </lineage>
</organism>
<keyword id="KW-0687">Ribonucleoprotein</keyword>
<keyword id="KW-0689">Ribosomal protein</keyword>